<feature type="chain" id="PRO_1000093055" description="S-adenosylmethionine synthase">
    <location>
        <begin position="1"/>
        <end position="384"/>
    </location>
</feature>
<feature type="region of interest" description="Flexible loop" evidence="1">
    <location>
        <begin position="99"/>
        <end position="109"/>
    </location>
</feature>
<feature type="binding site" description="in other chain" evidence="1">
    <location>
        <position position="15"/>
    </location>
    <ligand>
        <name>ATP</name>
        <dbReference type="ChEBI" id="CHEBI:30616"/>
        <note>ligand shared between two neighboring subunits</note>
    </ligand>
</feature>
<feature type="binding site" evidence="1">
    <location>
        <position position="17"/>
    </location>
    <ligand>
        <name>Mg(2+)</name>
        <dbReference type="ChEBI" id="CHEBI:18420"/>
    </ligand>
</feature>
<feature type="binding site" evidence="1">
    <location>
        <position position="43"/>
    </location>
    <ligand>
        <name>K(+)</name>
        <dbReference type="ChEBI" id="CHEBI:29103"/>
    </ligand>
</feature>
<feature type="binding site" description="in other chain" evidence="1">
    <location>
        <position position="56"/>
    </location>
    <ligand>
        <name>L-methionine</name>
        <dbReference type="ChEBI" id="CHEBI:57844"/>
        <note>ligand shared between two neighboring subunits</note>
    </ligand>
</feature>
<feature type="binding site" description="in other chain" evidence="1">
    <location>
        <position position="99"/>
    </location>
    <ligand>
        <name>L-methionine</name>
        <dbReference type="ChEBI" id="CHEBI:57844"/>
        <note>ligand shared between two neighboring subunits</note>
    </ligand>
</feature>
<feature type="binding site" description="in other chain" evidence="1">
    <location>
        <begin position="164"/>
        <end position="166"/>
    </location>
    <ligand>
        <name>ATP</name>
        <dbReference type="ChEBI" id="CHEBI:30616"/>
        <note>ligand shared between two neighboring subunits</note>
    </ligand>
</feature>
<feature type="binding site" description="in other chain" evidence="1">
    <location>
        <begin position="230"/>
        <end position="231"/>
    </location>
    <ligand>
        <name>ATP</name>
        <dbReference type="ChEBI" id="CHEBI:30616"/>
        <note>ligand shared between two neighboring subunits</note>
    </ligand>
</feature>
<feature type="binding site" evidence="1">
    <location>
        <position position="239"/>
    </location>
    <ligand>
        <name>ATP</name>
        <dbReference type="ChEBI" id="CHEBI:30616"/>
        <note>ligand shared between two neighboring subunits</note>
    </ligand>
</feature>
<feature type="binding site" evidence="1">
    <location>
        <position position="239"/>
    </location>
    <ligand>
        <name>L-methionine</name>
        <dbReference type="ChEBI" id="CHEBI:57844"/>
        <note>ligand shared between two neighboring subunits</note>
    </ligand>
</feature>
<feature type="binding site" description="in other chain" evidence="1">
    <location>
        <begin position="245"/>
        <end position="246"/>
    </location>
    <ligand>
        <name>ATP</name>
        <dbReference type="ChEBI" id="CHEBI:30616"/>
        <note>ligand shared between two neighboring subunits</note>
    </ligand>
</feature>
<feature type="binding site" evidence="1">
    <location>
        <position position="262"/>
    </location>
    <ligand>
        <name>ATP</name>
        <dbReference type="ChEBI" id="CHEBI:30616"/>
        <note>ligand shared between two neighboring subunits</note>
    </ligand>
</feature>
<feature type="binding site" evidence="1">
    <location>
        <position position="266"/>
    </location>
    <ligand>
        <name>ATP</name>
        <dbReference type="ChEBI" id="CHEBI:30616"/>
        <note>ligand shared between two neighboring subunits</note>
    </ligand>
</feature>
<feature type="binding site" description="in other chain" evidence="1">
    <location>
        <position position="270"/>
    </location>
    <ligand>
        <name>L-methionine</name>
        <dbReference type="ChEBI" id="CHEBI:57844"/>
        <note>ligand shared between two neighboring subunits</note>
    </ligand>
</feature>
<comment type="function">
    <text evidence="1">Catalyzes the formation of S-adenosylmethionine (AdoMet) from methionine and ATP. The overall synthetic reaction is composed of two sequential steps, AdoMet formation and the subsequent tripolyphosphate hydrolysis which occurs prior to release of AdoMet from the enzyme.</text>
</comment>
<comment type="catalytic activity">
    <reaction evidence="1">
        <text>L-methionine + ATP + H2O = S-adenosyl-L-methionine + phosphate + diphosphate</text>
        <dbReference type="Rhea" id="RHEA:21080"/>
        <dbReference type="ChEBI" id="CHEBI:15377"/>
        <dbReference type="ChEBI" id="CHEBI:30616"/>
        <dbReference type="ChEBI" id="CHEBI:33019"/>
        <dbReference type="ChEBI" id="CHEBI:43474"/>
        <dbReference type="ChEBI" id="CHEBI:57844"/>
        <dbReference type="ChEBI" id="CHEBI:59789"/>
        <dbReference type="EC" id="2.5.1.6"/>
    </reaction>
</comment>
<comment type="cofactor">
    <cofactor evidence="1">
        <name>Mg(2+)</name>
        <dbReference type="ChEBI" id="CHEBI:18420"/>
    </cofactor>
    <text evidence="1">Binds 2 divalent ions per subunit.</text>
</comment>
<comment type="cofactor">
    <cofactor evidence="1">
        <name>K(+)</name>
        <dbReference type="ChEBI" id="CHEBI:29103"/>
    </cofactor>
    <text evidence="1">Binds 1 potassium ion per subunit.</text>
</comment>
<comment type="pathway">
    <text evidence="1">Amino-acid biosynthesis; S-adenosyl-L-methionine biosynthesis; S-adenosyl-L-methionine from L-methionine: step 1/1.</text>
</comment>
<comment type="subunit">
    <text evidence="1">Homotetramer; dimer of dimers.</text>
</comment>
<comment type="subcellular location">
    <subcellularLocation>
        <location evidence="1">Cytoplasm</location>
    </subcellularLocation>
</comment>
<comment type="similarity">
    <text evidence="1">Belongs to the AdoMet synthase family.</text>
</comment>
<organism>
    <name type="scientific">Klebsiella pneumoniae (strain 342)</name>
    <dbReference type="NCBI Taxonomy" id="507522"/>
    <lineage>
        <taxon>Bacteria</taxon>
        <taxon>Pseudomonadati</taxon>
        <taxon>Pseudomonadota</taxon>
        <taxon>Gammaproteobacteria</taxon>
        <taxon>Enterobacterales</taxon>
        <taxon>Enterobacteriaceae</taxon>
        <taxon>Klebsiella/Raoultella group</taxon>
        <taxon>Klebsiella</taxon>
        <taxon>Klebsiella pneumoniae complex</taxon>
    </lineage>
</organism>
<accession>B5XUA8</accession>
<proteinExistence type="inferred from homology"/>
<dbReference type="EC" id="2.5.1.6" evidence="1"/>
<dbReference type="EMBL" id="CP000964">
    <property type="protein sequence ID" value="ACI08672.1"/>
    <property type="molecule type" value="Genomic_DNA"/>
</dbReference>
<dbReference type="SMR" id="B5XUA8"/>
<dbReference type="KEGG" id="kpe:KPK_0734"/>
<dbReference type="HOGENOM" id="CLU_041802_1_1_6"/>
<dbReference type="UniPathway" id="UPA00315">
    <property type="reaction ID" value="UER00080"/>
</dbReference>
<dbReference type="Proteomes" id="UP000001734">
    <property type="component" value="Chromosome"/>
</dbReference>
<dbReference type="GO" id="GO:0005737">
    <property type="term" value="C:cytoplasm"/>
    <property type="evidence" value="ECO:0007669"/>
    <property type="project" value="UniProtKB-SubCell"/>
</dbReference>
<dbReference type="GO" id="GO:0005524">
    <property type="term" value="F:ATP binding"/>
    <property type="evidence" value="ECO:0007669"/>
    <property type="project" value="UniProtKB-UniRule"/>
</dbReference>
<dbReference type="GO" id="GO:0000287">
    <property type="term" value="F:magnesium ion binding"/>
    <property type="evidence" value="ECO:0007669"/>
    <property type="project" value="UniProtKB-UniRule"/>
</dbReference>
<dbReference type="GO" id="GO:0004478">
    <property type="term" value="F:methionine adenosyltransferase activity"/>
    <property type="evidence" value="ECO:0007669"/>
    <property type="project" value="UniProtKB-UniRule"/>
</dbReference>
<dbReference type="GO" id="GO:0006730">
    <property type="term" value="P:one-carbon metabolic process"/>
    <property type="evidence" value="ECO:0007669"/>
    <property type="project" value="UniProtKB-KW"/>
</dbReference>
<dbReference type="GO" id="GO:0006556">
    <property type="term" value="P:S-adenosylmethionine biosynthetic process"/>
    <property type="evidence" value="ECO:0007669"/>
    <property type="project" value="UniProtKB-UniRule"/>
</dbReference>
<dbReference type="CDD" id="cd18079">
    <property type="entry name" value="S-AdoMet_synt"/>
    <property type="match status" value="1"/>
</dbReference>
<dbReference type="FunFam" id="3.30.300.10:FF:000001">
    <property type="entry name" value="S-adenosylmethionine synthase"/>
    <property type="match status" value="1"/>
</dbReference>
<dbReference type="FunFam" id="3.30.300.10:FF:000003">
    <property type="entry name" value="S-adenosylmethionine synthase"/>
    <property type="match status" value="1"/>
</dbReference>
<dbReference type="Gene3D" id="3.30.300.10">
    <property type="match status" value="3"/>
</dbReference>
<dbReference type="HAMAP" id="MF_00086">
    <property type="entry name" value="S_AdoMet_synth1"/>
    <property type="match status" value="1"/>
</dbReference>
<dbReference type="InterPro" id="IPR022631">
    <property type="entry name" value="ADOMET_SYNTHASE_CS"/>
</dbReference>
<dbReference type="InterPro" id="IPR022630">
    <property type="entry name" value="S-AdoMet_synt_C"/>
</dbReference>
<dbReference type="InterPro" id="IPR022629">
    <property type="entry name" value="S-AdoMet_synt_central"/>
</dbReference>
<dbReference type="InterPro" id="IPR022628">
    <property type="entry name" value="S-AdoMet_synt_N"/>
</dbReference>
<dbReference type="InterPro" id="IPR002133">
    <property type="entry name" value="S-AdoMet_synthetase"/>
</dbReference>
<dbReference type="InterPro" id="IPR022636">
    <property type="entry name" value="S-AdoMet_synthetase_sfam"/>
</dbReference>
<dbReference type="NCBIfam" id="TIGR01034">
    <property type="entry name" value="metK"/>
    <property type="match status" value="1"/>
</dbReference>
<dbReference type="PANTHER" id="PTHR11964">
    <property type="entry name" value="S-ADENOSYLMETHIONINE SYNTHETASE"/>
    <property type="match status" value="1"/>
</dbReference>
<dbReference type="Pfam" id="PF02773">
    <property type="entry name" value="S-AdoMet_synt_C"/>
    <property type="match status" value="1"/>
</dbReference>
<dbReference type="Pfam" id="PF02772">
    <property type="entry name" value="S-AdoMet_synt_M"/>
    <property type="match status" value="1"/>
</dbReference>
<dbReference type="Pfam" id="PF00438">
    <property type="entry name" value="S-AdoMet_synt_N"/>
    <property type="match status" value="1"/>
</dbReference>
<dbReference type="PIRSF" id="PIRSF000497">
    <property type="entry name" value="MAT"/>
    <property type="match status" value="1"/>
</dbReference>
<dbReference type="SUPFAM" id="SSF55973">
    <property type="entry name" value="S-adenosylmethionine synthetase"/>
    <property type="match status" value="3"/>
</dbReference>
<dbReference type="PROSITE" id="PS00376">
    <property type="entry name" value="ADOMET_SYNTHASE_1"/>
    <property type="match status" value="1"/>
</dbReference>
<dbReference type="PROSITE" id="PS00377">
    <property type="entry name" value="ADOMET_SYNTHASE_2"/>
    <property type="match status" value="1"/>
</dbReference>
<protein>
    <recommendedName>
        <fullName evidence="1">S-adenosylmethionine synthase</fullName>
        <shortName evidence="1">AdoMet synthase</shortName>
        <ecNumber evidence="1">2.5.1.6</ecNumber>
    </recommendedName>
    <alternativeName>
        <fullName evidence="1">MAT</fullName>
    </alternativeName>
    <alternativeName>
        <fullName evidence="1">Methionine adenosyltransferase</fullName>
    </alternativeName>
</protein>
<gene>
    <name evidence="1" type="primary">metK</name>
    <name type="ordered locus">KPK_0734</name>
</gene>
<evidence type="ECO:0000255" key="1">
    <source>
        <dbReference type="HAMAP-Rule" id="MF_00086"/>
    </source>
</evidence>
<sequence length="384" mass="41896">MAKHLFTSESVSEGHPDKIADQISDAVLDAILEQDPKARVACETYVKTGMVLVGGEITTSAWVDIEEITRNTVREIGYVHSDMGFDANSCAVLSAIGKQSPDINQGVDRADPLEQGAGDQGLMFGYATNETDVLMPAPVTYAHRLVQRQAEVRKNGTLPWLRPDAKSQVTFQYDDGKIVGIDAVVLSTQHAEDIDQKSLQEAVMEEIIKPTLPTEWLNASTKFFINPTGRFVIGGPMGDCGLTGRKIIVDTYGGMARHGGGAFSGKDPSKVDRSAAYAARYVAKNIVAAGLADRCEIQVSYAIGVAEPTSIMVETFGTEKVPSEQLTLLVREFFDLRPYGLIQMLDLLHPIYKETAAYGHFGREHFPWEKTDKAALLREAAGLK</sequence>
<name>METK_KLEP3</name>
<keyword id="KW-0067">ATP-binding</keyword>
<keyword id="KW-0963">Cytoplasm</keyword>
<keyword id="KW-0460">Magnesium</keyword>
<keyword id="KW-0479">Metal-binding</keyword>
<keyword id="KW-0547">Nucleotide-binding</keyword>
<keyword id="KW-0554">One-carbon metabolism</keyword>
<keyword id="KW-0630">Potassium</keyword>
<keyword id="KW-0808">Transferase</keyword>
<reference key="1">
    <citation type="journal article" date="2008" name="PLoS Genet.">
        <title>Complete genome sequence of the N2-fixing broad host range endophyte Klebsiella pneumoniae 342 and virulence predictions verified in mice.</title>
        <authorList>
            <person name="Fouts D.E."/>
            <person name="Tyler H.L."/>
            <person name="DeBoy R.T."/>
            <person name="Daugherty S."/>
            <person name="Ren Q."/>
            <person name="Badger J.H."/>
            <person name="Durkin A.S."/>
            <person name="Huot H."/>
            <person name="Shrivastava S."/>
            <person name="Kothari S."/>
            <person name="Dodson R.J."/>
            <person name="Mohamoud Y."/>
            <person name="Khouri H."/>
            <person name="Roesch L.F.W."/>
            <person name="Krogfelt K.A."/>
            <person name="Struve C."/>
            <person name="Triplett E.W."/>
            <person name="Methe B.A."/>
        </authorList>
    </citation>
    <scope>NUCLEOTIDE SEQUENCE [LARGE SCALE GENOMIC DNA]</scope>
    <source>
        <strain>342</strain>
    </source>
</reference>